<dbReference type="EMBL" id="AC139795">
    <property type="status" value="NOT_ANNOTATED_CDS"/>
    <property type="molecule type" value="Genomic_DNA"/>
</dbReference>
<dbReference type="EMBL" id="BC001123">
    <property type="protein sequence ID" value="AAH01123.2"/>
    <property type="molecule type" value="mRNA"/>
</dbReference>
<dbReference type="EMBL" id="X90872">
    <property type="protein sequence ID" value="CAA62380.1"/>
    <property type="status" value="ALT_INIT"/>
    <property type="molecule type" value="mRNA"/>
</dbReference>
<dbReference type="EMBL" id="AF441399">
    <property type="protein sequence ID" value="AAL35268.1"/>
    <property type="status" value="ALT_INIT"/>
    <property type="molecule type" value="mRNA"/>
</dbReference>
<dbReference type="CCDS" id="CCDS4428.1"/>
<dbReference type="RefSeq" id="NP_059980.2">
    <property type="nucleotide sequence ID" value="NM_017510.5"/>
</dbReference>
<dbReference type="PDB" id="9CJK">
    <property type="method" value="EM"/>
    <property type="resolution" value="3.70 A"/>
    <property type="chains" value="A/B/C/D/E/F/G/H=1-235"/>
</dbReference>
<dbReference type="PDB" id="9CJL">
    <property type="method" value="EM"/>
    <property type="resolution" value="5.50 A"/>
    <property type="chains" value="A/B/C/D/E/F/G/H/I/J/K/L=1-235"/>
</dbReference>
<dbReference type="PDBsum" id="9CJK"/>
<dbReference type="PDBsum" id="9CJL"/>
<dbReference type="EMDB" id="EMD-45634"/>
<dbReference type="EMDB" id="EMD-45635"/>
<dbReference type="SMR" id="Q9BVK6"/>
<dbReference type="BioGRID" id="120115">
    <property type="interactions" value="162"/>
</dbReference>
<dbReference type="ELM" id="Q9BVK6"/>
<dbReference type="FunCoup" id="Q9BVK6">
    <property type="interactions" value="2131"/>
</dbReference>
<dbReference type="IntAct" id="Q9BVK6">
    <property type="interactions" value="91"/>
</dbReference>
<dbReference type="MINT" id="Q9BVK6"/>
<dbReference type="STRING" id="9606.ENSP00000330945"/>
<dbReference type="TCDB" id="9.B.188.1.9">
    <property type="family name" value="the transmembrane emp24 domain-containing protein (tmed) family"/>
</dbReference>
<dbReference type="GlyConnect" id="1846">
    <property type="glycosylation" value="4 N-Linked glycans (1 site)"/>
</dbReference>
<dbReference type="GlyCosmos" id="Q9BVK6">
    <property type="glycosylation" value="1 site, 4 glycans"/>
</dbReference>
<dbReference type="GlyGen" id="Q9BVK6">
    <property type="glycosylation" value="3 sites, 12 N-linked glycans (1 site), 1 O-linked glycan (1 site)"/>
</dbReference>
<dbReference type="iPTMnet" id="Q9BVK6"/>
<dbReference type="MetOSite" id="Q9BVK6"/>
<dbReference type="PhosphoSitePlus" id="Q9BVK6"/>
<dbReference type="SwissPalm" id="Q9BVK6"/>
<dbReference type="BioMuta" id="TMED9"/>
<dbReference type="DMDM" id="239938724"/>
<dbReference type="jPOST" id="Q9BVK6"/>
<dbReference type="MassIVE" id="Q9BVK6"/>
<dbReference type="PaxDb" id="9606-ENSP00000330945"/>
<dbReference type="PeptideAtlas" id="Q9BVK6"/>
<dbReference type="ProteomicsDB" id="79214"/>
<dbReference type="Pumba" id="Q9BVK6"/>
<dbReference type="TopDownProteomics" id="Q9BVK6"/>
<dbReference type="Antibodypedia" id="29339">
    <property type="antibodies" value="163 antibodies from 24 providers"/>
</dbReference>
<dbReference type="DNASU" id="54732"/>
<dbReference type="Ensembl" id="ENST00000332598.7">
    <property type="protein sequence ID" value="ENSP00000330945.6"/>
    <property type="gene ID" value="ENSG00000184840.12"/>
</dbReference>
<dbReference type="GeneID" id="54732"/>
<dbReference type="KEGG" id="hsa:54732"/>
<dbReference type="MANE-Select" id="ENST00000332598.7">
    <property type="protein sequence ID" value="ENSP00000330945.6"/>
    <property type="RefSeq nucleotide sequence ID" value="NM_017510.6"/>
    <property type="RefSeq protein sequence ID" value="NP_059980.2"/>
</dbReference>
<dbReference type="UCSC" id="uc003mhx.4">
    <property type="organism name" value="human"/>
</dbReference>
<dbReference type="AGR" id="HGNC:24878"/>
<dbReference type="CTD" id="54732"/>
<dbReference type="DisGeNET" id="54732"/>
<dbReference type="GeneCards" id="TMED9"/>
<dbReference type="HGNC" id="HGNC:24878">
    <property type="gene designation" value="TMED9"/>
</dbReference>
<dbReference type="HPA" id="ENSG00000184840">
    <property type="expression patterns" value="Low tissue specificity"/>
</dbReference>
<dbReference type="MIM" id="620436">
    <property type="type" value="gene"/>
</dbReference>
<dbReference type="neXtProt" id="NX_Q9BVK6"/>
<dbReference type="OpenTargets" id="ENSG00000184840"/>
<dbReference type="PharmGKB" id="PA134881976"/>
<dbReference type="VEuPathDB" id="HostDB:ENSG00000184840"/>
<dbReference type="eggNOG" id="KOG1690">
    <property type="taxonomic scope" value="Eukaryota"/>
</dbReference>
<dbReference type="GeneTree" id="ENSGT00940000159747"/>
<dbReference type="HOGENOM" id="CLU_066963_2_2_1"/>
<dbReference type="InParanoid" id="Q9BVK6"/>
<dbReference type="OMA" id="AGIQFWH"/>
<dbReference type="OrthoDB" id="3427at2759"/>
<dbReference type="PAN-GO" id="Q9BVK6">
    <property type="GO annotations" value="8 GO annotations based on evolutionary models"/>
</dbReference>
<dbReference type="PhylomeDB" id="Q9BVK6"/>
<dbReference type="TreeFam" id="TF314123"/>
<dbReference type="PathwayCommons" id="Q9BVK6"/>
<dbReference type="Reactome" id="R-HSA-6807878">
    <property type="pathway name" value="COPI-mediated anterograde transport"/>
</dbReference>
<dbReference type="Reactome" id="R-HSA-6811434">
    <property type="pathway name" value="COPI-dependent Golgi-to-ER retrograde traffic"/>
</dbReference>
<dbReference type="SignaLink" id="Q9BVK6"/>
<dbReference type="BioGRID-ORCS" id="54732">
    <property type="hits" value="30 hits in 1164 CRISPR screens"/>
</dbReference>
<dbReference type="ChiTaRS" id="TMED9">
    <property type="organism name" value="human"/>
</dbReference>
<dbReference type="GenomeRNAi" id="54732"/>
<dbReference type="Pharos" id="Q9BVK6">
    <property type="development level" value="Tbio"/>
</dbReference>
<dbReference type="PRO" id="PR:Q9BVK6"/>
<dbReference type="Proteomes" id="UP000005640">
    <property type="component" value="Chromosome 5"/>
</dbReference>
<dbReference type="RNAct" id="Q9BVK6">
    <property type="molecule type" value="protein"/>
</dbReference>
<dbReference type="Bgee" id="ENSG00000184840">
    <property type="expression patterns" value="Expressed in tendon of biceps brachii and 208 other cell types or tissues"/>
</dbReference>
<dbReference type="ExpressionAtlas" id="Q9BVK6">
    <property type="expression patterns" value="baseline and differential"/>
</dbReference>
<dbReference type="GO" id="GO:0030134">
    <property type="term" value="C:COPII-coated ER to Golgi transport vesicle"/>
    <property type="evidence" value="ECO:0000318"/>
    <property type="project" value="GO_Central"/>
</dbReference>
<dbReference type="GO" id="GO:0005783">
    <property type="term" value="C:endoplasmic reticulum"/>
    <property type="evidence" value="ECO:0000314"/>
    <property type="project" value="UniProtKB"/>
</dbReference>
<dbReference type="GO" id="GO:0005789">
    <property type="term" value="C:endoplasmic reticulum membrane"/>
    <property type="evidence" value="ECO:0000304"/>
    <property type="project" value="Reactome"/>
</dbReference>
<dbReference type="GO" id="GO:0005793">
    <property type="term" value="C:endoplasmic reticulum-Golgi intermediate compartment"/>
    <property type="evidence" value="ECO:0000314"/>
    <property type="project" value="UniProtKB"/>
</dbReference>
<dbReference type="GO" id="GO:0033116">
    <property type="term" value="C:endoplasmic reticulum-Golgi intermediate compartment membrane"/>
    <property type="evidence" value="ECO:0000304"/>
    <property type="project" value="Reactome"/>
</dbReference>
<dbReference type="GO" id="GO:0070062">
    <property type="term" value="C:extracellular exosome"/>
    <property type="evidence" value="ECO:0007005"/>
    <property type="project" value="UniProtKB"/>
</dbReference>
<dbReference type="GO" id="GO:0005794">
    <property type="term" value="C:Golgi apparatus"/>
    <property type="evidence" value="ECO:0000314"/>
    <property type="project" value="UniProtKB"/>
</dbReference>
<dbReference type="GO" id="GO:0000139">
    <property type="term" value="C:Golgi membrane"/>
    <property type="evidence" value="ECO:0000304"/>
    <property type="project" value="Reactome"/>
</dbReference>
<dbReference type="GO" id="GO:0008021">
    <property type="term" value="C:synaptic vesicle"/>
    <property type="evidence" value="ECO:0007669"/>
    <property type="project" value="Ensembl"/>
</dbReference>
<dbReference type="GO" id="GO:0030140">
    <property type="term" value="C:trans-Golgi network transport vesicle"/>
    <property type="evidence" value="ECO:0000304"/>
    <property type="project" value="UniProtKB"/>
</dbReference>
<dbReference type="GO" id="GO:0030133">
    <property type="term" value="C:transport vesicle"/>
    <property type="evidence" value="ECO:0000304"/>
    <property type="project" value="Reactome"/>
</dbReference>
<dbReference type="GO" id="GO:0019905">
    <property type="term" value="F:syntaxin binding"/>
    <property type="evidence" value="ECO:0000353"/>
    <property type="project" value="UniProtKB"/>
</dbReference>
<dbReference type="GO" id="GO:0048205">
    <property type="term" value="P:COPI coating of Golgi vesicle"/>
    <property type="evidence" value="ECO:0000315"/>
    <property type="project" value="UniProtKB"/>
</dbReference>
<dbReference type="GO" id="GO:0006888">
    <property type="term" value="P:endoplasmic reticulum to Golgi vesicle-mediated transport"/>
    <property type="evidence" value="ECO:0000318"/>
    <property type="project" value="GO_Central"/>
</dbReference>
<dbReference type="GO" id="GO:0007030">
    <property type="term" value="P:Golgi organization"/>
    <property type="evidence" value="ECO:0000315"/>
    <property type="project" value="UniProtKB"/>
</dbReference>
<dbReference type="GO" id="GO:0006886">
    <property type="term" value="P:intracellular protein transport"/>
    <property type="evidence" value="ECO:0000318"/>
    <property type="project" value="GO_Central"/>
</dbReference>
<dbReference type="GO" id="GO:0010638">
    <property type="term" value="P:positive regulation of organelle organization"/>
    <property type="evidence" value="ECO:0000315"/>
    <property type="project" value="UniProtKB"/>
</dbReference>
<dbReference type="InterPro" id="IPR015720">
    <property type="entry name" value="Emp24-like"/>
</dbReference>
<dbReference type="InterPro" id="IPR009038">
    <property type="entry name" value="GOLD_dom"/>
</dbReference>
<dbReference type="PANTHER" id="PTHR22811">
    <property type="entry name" value="TRANSMEMBRANE EMP24 DOMAIN-CONTAINING PROTEIN"/>
    <property type="match status" value="1"/>
</dbReference>
<dbReference type="Pfam" id="PF01105">
    <property type="entry name" value="EMP24_GP25L"/>
    <property type="match status" value="1"/>
</dbReference>
<dbReference type="SMART" id="SM01190">
    <property type="entry name" value="EMP24_GP25L"/>
    <property type="match status" value="1"/>
</dbReference>
<dbReference type="PROSITE" id="PS50866">
    <property type="entry name" value="GOLD"/>
    <property type="match status" value="1"/>
</dbReference>
<name>TMED9_HUMAN</name>
<gene>
    <name type="primary">TMED9</name>
    <name type="synonym">GP25L2</name>
</gene>
<reference key="1">
    <citation type="journal article" date="2004" name="Nature">
        <title>The DNA sequence and comparative analysis of human chromosome 5.</title>
        <authorList>
            <person name="Schmutz J."/>
            <person name="Martin J."/>
            <person name="Terry A."/>
            <person name="Couronne O."/>
            <person name="Grimwood J."/>
            <person name="Lowry S."/>
            <person name="Gordon L.A."/>
            <person name="Scott D."/>
            <person name="Xie G."/>
            <person name="Huang W."/>
            <person name="Hellsten U."/>
            <person name="Tran-Gyamfi M."/>
            <person name="She X."/>
            <person name="Prabhakar S."/>
            <person name="Aerts A."/>
            <person name="Altherr M."/>
            <person name="Bajorek E."/>
            <person name="Black S."/>
            <person name="Branscomb E."/>
            <person name="Caoile C."/>
            <person name="Challacombe J.F."/>
            <person name="Chan Y.M."/>
            <person name="Denys M."/>
            <person name="Detter J.C."/>
            <person name="Escobar J."/>
            <person name="Flowers D."/>
            <person name="Fotopulos D."/>
            <person name="Glavina T."/>
            <person name="Gomez M."/>
            <person name="Gonzales E."/>
            <person name="Goodstein D."/>
            <person name="Grigoriev I."/>
            <person name="Groza M."/>
            <person name="Hammon N."/>
            <person name="Hawkins T."/>
            <person name="Haydu L."/>
            <person name="Israni S."/>
            <person name="Jett J."/>
            <person name="Kadner K."/>
            <person name="Kimball H."/>
            <person name="Kobayashi A."/>
            <person name="Lopez F."/>
            <person name="Lou Y."/>
            <person name="Martinez D."/>
            <person name="Medina C."/>
            <person name="Morgan J."/>
            <person name="Nandkeshwar R."/>
            <person name="Noonan J.P."/>
            <person name="Pitluck S."/>
            <person name="Pollard M."/>
            <person name="Predki P."/>
            <person name="Priest J."/>
            <person name="Ramirez L."/>
            <person name="Retterer J."/>
            <person name="Rodriguez A."/>
            <person name="Rogers S."/>
            <person name="Salamov A."/>
            <person name="Salazar A."/>
            <person name="Thayer N."/>
            <person name="Tice H."/>
            <person name="Tsai M."/>
            <person name="Ustaszewska A."/>
            <person name="Vo N."/>
            <person name="Wheeler J."/>
            <person name="Wu K."/>
            <person name="Yang J."/>
            <person name="Dickson M."/>
            <person name="Cheng J.-F."/>
            <person name="Eichler E.E."/>
            <person name="Olsen A."/>
            <person name="Pennacchio L.A."/>
            <person name="Rokhsar D.S."/>
            <person name="Richardson P."/>
            <person name="Lucas S.M."/>
            <person name="Myers R.M."/>
            <person name="Rubin E.M."/>
        </authorList>
    </citation>
    <scope>NUCLEOTIDE SEQUENCE [LARGE SCALE GENOMIC DNA]</scope>
</reference>
<reference key="2">
    <citation type="journal article" date="2004" name="Genome Res.">
        <title>The status, quality, and expansion of the NIH full-length cDNA project: the Mammalian Gene Collection (MGC).</title>
        <authorList>
            <consortium name="The MGC Project Team"/>
        </authorList>
    </citation>
    <scope>NUCLEOTIDE SEQUENCE [LARGE SCALE MRNA]</scope>
    <source>
        <tissue>Skin</tissue>
    </source>
</reference>
<reference key="3">
    <citation type="submission" date="1995-08" db="EMBL/GenBank/DDBJ databases">
        <authorList>
            <person name="Dominguez M."/>
            <person name="Fazel A."/>
            <person name="Parlati F."/>
            <person name="Bell A.W."/>
            <person name="Thomas D.Y."/>
            <person name="Bergeron J.J.M."/>
        </authorList>
    </citation>
    <scope>NUCLEOTIDE SEQUENCE [MRNA] OF 6-235</scope>
    <source>
        <tissue>Liver</tissue>
    </source>
</reference>
<reference key="4">
    <citation type="submission" date="2001-10" db="EMBL/GenBank/DDBJ databases">
        <title>A novel human cDNA that shares sequence homology with Homo sapiens mRNAs LOC96645 and gp25L2.</title>
        <authorList>
            <person name="Wang C."/>
            <person name="Li Y."/>
        </authorList>
    </citation>
    <scope>NUCLEOTIDE SEQUENCE [MRNA] OF 16-235</scope>
</reference>
<reference key="5">
    <citation type="submission" date="2005-03" db="UniProtKB">
        <authorList>
            <person name="Bienvenut W.V."/>
        </authorList>
    </citation>
    <scope>PROTEIN SEQUENCE OF 129-138 AND 170-180</scope>
    <scope>IDENTIFICATION BY MASS SPECTROMETRY</scope>
    <source>
        <tissue>B-cell lymphoma</tissue>
    </source>
</reference>
<reference key="6">
    <citation type="journal article" date="1999" name="Mol. Biol. Cell">
        <title>Localization and recycling of gp27 (hp24gamma3): complex formation with other p24 family members.</title>
        <authorList>
            <person name="Fullekrug J."/>
            <person name="Suganuma T."/>
            <person name="Tang B.L."/>
            <person name="Hong W."/>
            <person name="Storrie B."/>
            <person name="Nilsson T."/>
        </authorList>
    </citation>
    <scope>GLYCOSYLATION</scope>
    <scope>SUBUNIT</scope>
</reference>
<reference key="7">
    <citation type="journal article" date="2000" name="J. Cell Sci.">
        <title>Coupled transport of p24 family members.</title>
        <authorList>
            <person name="Emery G."/>
            <person name="Rojo M."/>
            <person name="Gruenberg J."/>
        </authorList>
    </citation>
    <scope>FUNCTION</scope>
    <scope>SUBCELLULAR LOCATION</scope>
</reference>
<reference key="8">
    <citation type="journal article" date="2002" name="J. Biol. Chem.">
        <title>Oligomeric state and stoichiometry of p24 proteins in the early secretory pathway.</title>
        <authorList>
            <person name="Jenne N."/>
            <person name="Frey K."/>
            <person name="Brugger B."/>
            <person name="Wieland F.T."/>
        </authorList>
    </citation>
    <scope>SUBCELLULAR LOCATION</scope>
    <scope>SUBUNIT</scope>
</reference>
<reference key="9">
    <citation type="journal article" date="2003" name="J. Cell Sci.">
        <title>The trans-membrane protein p25 forms highly specialized domains that regulate membrane composition and dynamics.</title>
        <authorList>
            <person name="Emery G."/>
            <person name="Parton R.G."/>
            <person name="Rojo M."/>
            <person name="Gruenberg J."/>
        </authorList>
    </citation>
    <scope>FUNCTION</scope>
    <scope>SUBCELLULAR LOCATION</scope>
    <scope>MUTAGENESIS OF 232-LYS-LYS-233</scope>
</reference>
<reference key="10">
    <citation type="journal article" date="2003" name="Nat. Biotechnol.">
        <title>Identification and quantification of N-linked glycoproteins using hydrazide chemistry, stable isotope labeling and mass spectrometry.</title>
        <authorList>
            <person name="Zhang H."/>
            <person name="Li X.-J."/>
            <person name="Martin D.B."/>
            <person name="Aebersold R."/>
        </authorList>
    </citation>
    <scope>GLYCOSYLATION AT ASN-125</scope>
</reference>
<reference key="11">
    <citation type="journal article" date="2005" name="Hum. Mol. Genet.">
        <title>The hereditary spastic paraplegia protein spastin interacts with the ESCRT-III complex-associated endosomal protein CHMP1B.</title>
        <authorList>
            <person name="Reid E."/>
            <person name="Connell J.W."/>
            <person name="Edwards T.L."/>
            <person name="Duley S."/>
            <person name="Brown S.E."/>
            <person name="Sanderson C.M."/>
        </authorList>
    </citation>
    <scope>INTERACTION WITH SPAST</scope>
</reference>
<reference key="12">
    <citation type="journal article" date="2006" name="J. Cell Sci.">
        <title>Evidence for a role of transmembrane protein p25 in localization of protein tyrosine phosphatase TC48 to the ER.</title>
        <authorList>
            <person name="Gupta V."/>
            <person name="Swarup G."/>
        </authorList>
    </citation>
    <scope>FUNCTION</scope>
    <scope>INTERACTION WITH PTPN2</scope>
</reference>
<reference key="13">
    <citation type="journal article" date="2006" name="Mol. Cell. Biol.">
        <title>Coatomer, the coat protein of COPI transport vesicles, discriminates endoplasmic reticulum residents from p24 proteins.</title>
        <authorList>
            <person name="Bethune J."/>
            <person name="Kol M."/>
            <person name="Hoffmann J."/>
            <person name="Reckmann I."/>
            <person name="Brugger B."/>
            <person name="Wieland F."/>
        </authorList>
    </citation>
    <scope>INTERACTION WITH COPG1</scope>
</reference>
<reference key="14">
    <citation type="journal article" date="2008" name="Mol. Biol. Cell">
        <title>The cargo receptors Surf4, endoplasmic reticulum-Golgi intermediate compartment (ERGIC)-53, and p25 are required to maintain the architecture of ERGIC and Golgi.</title>
        <authorList>
            <person name="Mitrovic S."/>
            <person name="Ben-Tekaya H."/>
            <person name="Koegler E."/>
            <person name="Gruenberg J."/>
            <person name="Hauri H.-P."/>
        </authorList>
    </citation>
    <scope>FUNCTION</scope>
</reference>
<reference key="15">
    <citation type="journal article" date="2009" name="Cell. Signal.">
        <title>Arf GAP2 is positively regulated by coatomer and cargo.</title>
        <authorList>
            <person name="Luo R."/>
            <person name="Ha V.L."/>
            <person name="Hayashi R."/>
            <person name="Randazzo P.A."/>
        </authorList>
    </citation>
    <scope>FUNCTION</scope>
</reference>
<reference key="16">
    <citation type="journal article" date="2009" name="J. Proteome Res.">
        <title>Glycoproteomics analysis of human liver tissue by combination of multiple enzyme digestion and hydrazide chemistry.</title>
        <authorList>
            <person name="Chen R."/>
            <person name="Jiang X."/>
            <person name="Sun D."/>
            <person name="Han G."/>
            <person name="Wang F."/>
            <person name="Ye M."/>
            <person name="Wang L."/>
            <person name="Zou H."/>
        </authorList>
    </citation>
    <scope>GLYCOSYLATION [LARGE SCALE ANALYSIS] AT ASN-125</scope>
    <source>
        <tissue>Liver</tissue>
    </source>
</reference>
<reference key="17">
    <citation type="journal article" date="2010" name="Traffic">
        <title>p28, a novel ERGIC/cis Golgi protein, required for Golgi ribbon formation.</title>
        <authorList>
            <person name="Koegler E."/>
            <person name="Bonnon C."/>
            <person name="Waldmeier L."/>
            <person name="Mitrovic S."/>
            <person name="Halbeisen R."/>
            <person name="Hauri H.P."/>
        </authorList>
    </citation>
    <scope>INTERACTION WITH TMED5</scope>
</reference>
<reference key="18">
    <citation type="journal article" date="2011" name="BMC Syst. Biol.">
        <title>Initial characterization of the human central proteome.</title>
        <authorList>
            <person name="Burkard T.R."/>
            <person name="Planyavsky M."/>
            <person name="Kaupe I."/>
            <person name="Breitwieser F.P."/>
            <person name="Buerckstuemmer T."/>
            <person name="Bennett K.L."/>
            <person name="Superti-Furga G."/>
            <person name="Colinge J."/>
        </authorList>
    </citation>
    <scope>IDENTIFICATION BY MASS SPECTROMETRY [LARGE SCALE ANALYSIS]</scope>
</reference>
<reference key="19">
    <citation type="journal article" date="2011" name="Biol. Cell">
        <title>Syntaxin 17 cycles between the ER and ERGIC and is required to maintain the architecture of ERGIC and Golgi.</title>
        <authorList>
            <person name="Muppirala M."/>
            <person name="Gupta V."/>
            <person name="Swarup G."/>
        </authorList>
    </citation>
    <scope>INTERACTION WITH STX17</scope>
</reference>
<reference key="20">
    <citation type="journal article" date="2015" name="Proteomics">
        <title>N-terminome analysis of the human mitochondrial proteome.</title>
        <authorList>
            <person name="Vaca Jacome A.S."/>
            <person name="Rabilloud T."/>
            <person name="Schaeffer-Reiss C."/>
            <person name="Rompais M."/>
            <person name="Ayoub D."/>
            <person name="Lane L."/>
            <person name="Bairoch A."/>
            <person name="Van Dorsselaer A."/>
            <person name="Carapito C."/>
        </authorList>
    </citation>
    <scope>IDENTIFICATION BY MASS SPECTROMETRY [LARGE SCALE ANALYSIS]</scope>
</reference>
<feature type="signal peptide" evidence="1">
    <location>
        <begin position="1"/>
        <end position="37"/>
    </location>
</feature>
<feature type="chain" id="PRO_0000010396" description="Transmembrane emp24 domain-containing protein 9">
    <location>
        <begin position="38"/>
        <end position="235"/>
    </location>
</feature>
<feature type="topological domain" description="Lumenal" evidence="3">
    <location>
        <begin position="38"/>
        <end position="202"/>
    </location>
</feature>
<feature type="transmembrane region" description="Helical" evidence="3">
    <location>
        <begin position="203"/>
        <end position="222"/>
    </location>
</feature>
<feature type="topological domain" description="Cytoplasmic" evidence="3">
    <location>
        <begin position="223"/>
        <end position="235"/>
    </location>
</feature>
<feature type="domain" description="GOLD" evidence="4">
    <location>
        <begin position="47"/>
        <end position="145"/>
    </location>
</feature>
<feature type="region of interest" description="Required for interaction with STX17" evidence="17">
    <location>
        <begin position="121"/>
        <end position="160"/>
    </location>
</feature>
<feature type="coiled-coil region" evidence="3">
    <location>
        <begin position="154"/>
        <end position="184"/>
    </location>
</feature>
<feature type="short sequence motif" description="COPI vesicle coat-binding" evidence="3">
    <location>
        <begin position="228"/>
        <end position="235"/>
    </location>
</feature>
<feature type="short sequence motif" description="COPII vesicle coat-binding" evidence="3">
    <location>
        <begin position="228"/>
        <end position="229"/>
    </location>
</feature>
<feature type="modified residue" description="N6-acetyllysine" evidence="2">
    <location>
        <position position="160"/>
    </location>
</feature>
<feature type="glycosylation site" description="N-linked (GlcNAc...) asparagine" evidence="8 14">
    <location>
        <position position="125"/>
    </location>
</feature>
<feature type="sequence variant" id="VAR_061178" description="In dbSNP:rs57960711.">
    <original>T</original>
    <variation>S</variation>
    <location>
        <position position="16"/>
    </location>
</feature>
<feature type="mutagenesis site" description="Localization to plasma membrane and endocytosis." evidence="9">
    <original>KK</original>
    <variation>SS</variation>
    <location>
        <begin position="232"/>
        <end position="233"/>
    </location>
</feature>
<feature type="sequence conflict" description="In Ref. 2; CAA62380." evidence="18" ref="2">
    <original>L</original>
    <variation>F</variation>
    <location>
        <position position="83"/>
    </location>
</feature>
<feature type="sequence conflict" description="In Ref. 2; CAA62380." evidence="18" ref="2">
    <original>F</original>
    <variation>C</variation>
    <location>
        <position position="86"/>
    </location>
</feature>
<feature type="sequence conflict" description="In Ref. 2; CAA62380." evidence="18" ref="2">
    <original>Q</original>
    <variation>E</variation>
    <location>
        <position position="101"/>
    </location>
</feature>
<feature type="sequence conflict" description="In Ref. 3; AAL35268." evidence="18" ref="3">
    <original>Y</original>
    <variation>C</variation>
    <location>
        <position position="102"/>
    </location>
</feature>
<feature type="sequence conflict" description="In Ref. 2; CAA62380." evidence="18" ref="2">
    <original>A</original>
    <variation>P</variation>
    <location>
        <position position="156"/>
    </location>
</feature>
<keyword id="KW-0002">3D-structure</keyword>
<keyword id="KW-0007">Acetylation</keyword>
<keyword id="KW-0175">Coiled coil</keyword>
<keyword id="KW-0903">Direct protein sequencing</keyword>
<keyword id="KW-0256">Endoplasmic reticulum</keyword>
<keyword id="KW-0325">Glycoprotein</keyword>
<keyword id="KW-0333">Golgi apparatus</keyword>
<keyword id="KW-0472">Membrane</keyword>
<keyword id="KW-0653">Protein transport</keyword>
<keyword id="KW-1267">Proteomics identification</keyword>
<keyword id="KW-1185">Reference proteome</keyword>
<keyword id="KW-0732">Signal</keyword>
<keyword id="KW-0812">Transmembrane</keyword>
<keyword id="KW-1133">Transmembrane helix</keyword>
<keyword id="KW-0813">Transport</keyword>
<proteinExistence type="evidence at protein level"/>
<sequence>MAVELGVLLVRPRPGTGLGRVMRTLLLVLWLATRGSALYFHIGETEKKCFIEEIPDETMVIGNYRTQLYDKQREEYQPATPGLGMFVEVKDPEDKVILARQYGSEGRFTFTSHTPGEHQICLHSNSTKFSLFAGGMLRVHLDIQVGEHANDYAEIAAKDKLSELQLRVRQLVEQVEQIQKEQNYQRWREERFRQTSESTNQRVLWWSILQTLILVAIGVWQMRHLKSFFEAKKLV</sequence>
<accession>Q9BVK6</accession>
<accession>Q14437</accession>
<accession>Q8WZ61</accession>
<comment type="function">
    <text evidence="6 9 11 13 15">Appears to be involved in vesicular protein trafficking, mainly in the early secretory pathway. In COPI vesicle-mediated retrograde transport involved in the coatomer recruitment to membranes of the early secretory pathway. Increases coatomer-dependent activity of ARFGAP2. Thought to play a crucial role in the specific retention of p24 complexes in cis-Golgi membranes; specifically contributes to the coupled localization of TMED2 and TMED10 in the cis-Golgi network. May be involved in organization of intracellular membranes, such as of the ER-Golgi intermediate compartment and the Golgi apparatus. Involved in ER localization of PTPN2 isoform PTPB.</text>
</comment>
<comment type="subunit">
    <text evidence="5 7 10 11 12 16 17">Monomer and homodimer in endoplasmic reticulum. Predominantly monomeric and to lesser extent homodimeric in endoplasmic reticulum-Golgi intermediate compartment and cis-Golgi network. Probably oligomerizes with other members of the EMP24/GP25L family such as TMED2, TMED7 and TMED10. Interacts with TMED5. Interacts (via C-terminus) with COPG1; the interaction involves dimeric TMED9. Interacts with PTPN2 and SPAST. Interacts with STX17; the interaction is direct.</text>
</comment>
<comment type="interaction">
    <interactant intactId="EBI-1056827">
        <id>Q9BVK6</id>
    </interactant>
    <interactant intactId="EBI-17444777">
        <id>O43315</id>
        <label>AQP9</label>
    </interactant>
    <organismsDiffer>false</organismsDiffer>
    <experiments>3</experiments>
</comment>
<comment type="interaction">
    <interactant intactId="EBI-1056827">
        <id>Q9BVK6</id>
    </interactant>
    <interactant intactId="EBI-2431769">
        <id>O43736</id>
        <label>ITM2A</label>
    </interactant>
    <organismsDiffer>false</organismsDiffer>
    <experiments>3</experiments>
</comment>
<comment type="interaction">
    <interactant intactId="EBI-1056827">
        <id>Q9BVK6</id>
    </interactant>
    <interactant intactId="EBI-12955265">
        <id>Q96GM1</id>
        <label>PLPPR2</label>
    </interactant>
    <organismsDiffer>false</organismsDiffer>
    <experiments>3</experiments>
</comment>
<comment type="interaction">
    <interactant intactId="EBI-1056827">
        <id>Q9BVK6</id>
    </interactant>
    <interactant intactId="EBI-4409481">
        <id>P17706-1</id>
        <label>PTPN2</label>
    </interactant>
    <organismsDiffer>false</organismsDiffer>
    <experiments>5</experiments>
</comment>
<comment type="interaction">
    <interactant intactId="EBI-1056827">
        <id>Q9BVK6</id>
    </interactant>
    <interactant intactId="EBI-8652744">
        <id>Q96IW7</id>
        <label>SEC22A</label>
    </interactant>
    <organismsDiffer>false</organismsDiffer>
    <experiments>3</experiments>
</comment>
<comment type="interaction">
    <interactant intactId="EBI-1056827">
        <id>Q9BVK6</id>
    </interactant>
    <interactant intactId="EBI-2852148">
        <id>Q9H2L4</id>
        <label>TMEM60</label>
    </interactant>
    <organismsDiffer>false</organismsDiffer>
    <experiments>3</experiments>
</comment>
<comment type="subcellular location">
    <subcellularLocation>
        <location>Endoplasmic reticulum membrane</location>
        <topology>Single-pass type I membrane protein</topology>
    </subcellularLocation>
    <subcellularLocation>
        <location>Golgi apparatus</location>
        <location>cis-Golgi network membrane</location>
        <topology>Single-pass type I membrane protein</topology>
    </subcellularLocation>
    <subcellularLocation>
        <location>Endoplasmic reticulum-Golgi intermediate compartment membrane</location>
        <topology>Single-pass type I membrane protein</topology>
    </subcellularLocation>
    <subcellularLocation>
        <location evidence="1">Golgi apparatus</location>
        <location evidence="1">trans-Golgi network membrane</location>
        <topology evidence="1">Single-pass type I membrane protein</topology>
    </subcellularLocation>
    <text>Cycles between compartments of the early secretatory pathway.</text>
</comment>
<comment type="PTM">
    <text evidence="5 8 14">N-linked glycosylated containing high mannose.</text>
</comment>
<comment type="similarity">
    <text evidence="18">Belongs to the EMP24/GP25L family.</text>
</comment>
<comment type="sequence caution" evidence="18">
    <conflict type="erroneous initiation">
        <sequence resource="EMBL-CDS" id="AAL35268"/>
    </conflict>
    <text>Truncated N-terminus.</text>
</comment>
<comment type="sequence caution" evidence="18">
    <conflict type="erroneous initiation">
        <sequence resource="EMBL-CDS" id="CAA62380"/>
    </conflict>
    <text>Truncated N-terminus.</text>
</comment>
<organism>
    <name type="scientific">Homo sapiens</name>
    <name type="common">Human</name>
    <dbReference type="NCBI Taxonomy" id="9606"/>
    <lineage>
        <taxon>Eukaryota</taxon>
        <taxon>Metazoa</taxon>
        <taxon>Chordata</taxon>
        <taxon>Craniata</taxon>
        <taxon>Vertebrata</taxon>
        <taxon>Euteleostomi</taxon>
        <taxon>Mammalia</taxon>
        <taxon>Eutheria</taxon>
        <taxon>Euarchontoglires</taxon>
        <taxon>Primates</taxon>
        <taxon>Haplorrhini</taxon>
        <taxon>Catarrhini</taxon>
        <taxon>Hominidae</taxon>
        <taxon>Homo</taxon>
    </lineage>
</organism>
<evidence type="ECO:0000250" key="1"/>
<evidence type="ECO:0000250" key="2">
    <source>
        <dbReference type="UniProtKB" id="Q99KF1"/>
    </source>
</evidence>
<evidence type="ECO:0000255" key="3"/>
<evidence type="ECO:0000255" key="4">
    <source>
        <dbReference type="PROSITE-ProRule" id="PRU00096"/>
    </source>
</evidence>
<evidence type="ECO:0000269" key="5">
    <source>
    </source>
</evidence>
<evidence type="ECO:0000269" key="6">
    <source>
    </source>
</evidence>
<evidence type="ECO:0000269" key="7">
    <source>
    </source>
</evidence>
<evidence type="ECO:0000269" key="8">
    <source>
    </source>
</evidence>
<evidence type="ECO:0000269" key="9">
    <source>
    </source>
</evidence>
<evidence type="ECO:0000269" key="10">
    <source>
    </source>
</evidence>
<evidence type="ECO:0000269" key="11">
    <source>
    </source>
</evidence>
<evidence type="ECO:0000269" key="12">
    <source>
    </source>
</evidence>
<evidence type="ECO:0000269" key="13">
    <source>
    </source>
</evidence>
<evidence type="ECO:0000269" key="14">
    <source>
    </source>
</evidence>
<evidence type="ECO:0000269" key="15">
    <source>
    </source>
</evidence>
<evidence type="ECO:0000269" key="16">
    <source>
    </source>
</evidence>
<evidence type="ECO:0000269" key="17">
    <source>
    </source>
</evidence>
<evidence type="ECO:0000305" key="18"/>
<protein>
    <recommendedName>
        <fullName>Transmembrane emp24 domain-containing protein 9</fullName>
    </recommendedName>
    <alternativeName>
        <fullName>GMP25</fullName>
    </alternativeName>
    <alternativeName>
        <fullName>Glycoprotein 25L2</fullName>
    </alternativeName>
    <alternativeName>
        <fullName>p24 family protein alpha-2</fullName>
        <shortName>p24alpha2</shortName>
    </alternativeName>
    <alternativeName>
        <fullName>p25</fullName>
    </alternativeName>
</protein>